<sequence>MAQLKVVTRDGSLHEFEAPDGYTVMEAIRDQGIDELLAICGGCCSCATCHVFVEEAFLDKLPPLKGDEDDLLDSSDHRQANSRLSCQLPIGPELGGMTVTIAPED</sequence>
<proteinExistence type="evidence at protein level"/>
<name>LIGXC_SPHSK</name>
<evidence type="ECO:0000255" key="1">
    <source>
        <dbReference type="PROSITE-ProRule" id="PRU00465"/>
    </source>
</evidence>
<evidence type="ECO:0000269" key="2">
    <source>
    </source>
</evidence>
<evidence type="ECO:0000303" key="3">
    <source>
    </source>
</evidence>
<evidence type="ECO:0000305" key="4"/>
<evidence type="ECO:0000312" key="5">
    <source>
        <dbReference type="EMBL" id="BAK65525.1"/>
    </source>
</evidence>
<comment type="function">
    <text evidence="2">Involved in the catabolism of 5,5'-dehydrodivanillate (DDVA), an intermediate in the biodegradation of lignin. Part of a three-component monooxygenase that catalyzes the O-demethylation of DDVA, leading to the formation of 2,2',3-trihydroxy-3'-methoxy-5,5'-dicarboxybiphenyl (OH-DDVA). LigXc probably functions as an intermediate electron transfer protein between LigXd and LigXa.</text>
</comment>
<comment type="catalytic activity">
    <reaction evidence="2">
        <text>5,5'-dehydrodivanillate + NADH + O2 + H(+) = 2,2',3-trihydroxy-3'-methoxy-5,5'-dicarboxybiphenyl + formaldehyde + NAD(+) + H2O</text>
        <dbReference type="Rhea" id="RHEA:57008"/>
        <dbReference type="ChEBI" id="CHEBI:15377"/>
        <dbReference type="ChEBI" id="CHEBI:15378"/>
        <dbReference type="ChEBI" id="CHEBI:15379"/>
        <dbReference type="ChEBI" id="CHEBI:16842"/>
        <dbReference type="ChEBI" id="CHEBI:57540"/>
        <dbReference type="ChEBI" id="CHEBI:57945"/>
        <dbReference type="ChEBI" id="CHEBI:141401"/>
        <dbReference type="ChEBI" id="CHEBI:141402"/>
    </reaction>
</comment>
<comment type="cofactor">
    <cofactor evidence="1">
        <name>[2Fe-2S] cluster</name>
        <dbReference type="ChEBI" id="CHEBI:190135"/>
    </cofactor>
    <text evidence="1">Binds 1 [2Fe-2S] cluster.</text>
</comment>
<comment type="biophysicochemical properties">
    <phDependence>
        <text evidence="2">Optimum pH is 6.0.</text>
    </phDependence>
    <temperatureDependence>
        <text evidence="2">Optimum temperature is 25-30 degrees Celsius.</text>
    </temperatureDependence>
</comment>
<comment type="subunit">
    <text evidence="2">Monomer. The three-component monooxygenase is composed of an oxygenase (LigXa), a ferredoxin (LigXc) and a ferredoxin reductase (LigXd).</text>
</comment>
<comment type="disruption phenotype">
    <text evidence="2">Disruption mutant shows growth defect on DDVA.</text>
</comment>
<comment type="similarity">
    <text evidence="4">Belongs to the adrenodoxin/putidaredoxin family.</text>
</comment>
<gene>
    <name evidence="3" type="primary">ligXc</name>
    <name evidence="5" type="ORF">SLG_08500</name>
</gene>
<feature type="chain" id="PRO_0000445224" description="5,5'-dehydrodivanillate O-demethylase ferredoxin subunit">
    <location>
        <begin position="1"/>
        <end position="105"/>
    </location>
</feature>
<feature type="domain" description="2Fe-2S ferredoxin-type" evidence="1">
    <location>
        <begin position="2"/>
        <end position="105"/>
    </location>
</feature>
<feature type="binding site" evidence="1">
    <location>
        <position position="40"/>
    </location>
    <ligand>
        <name>[2Fe-2S] cluster</name>
        <dbReference type="ChEBI" id="CHEBI:190135"/>
    </ligand>
</feature>
<feature type="binding site" evidence="1">
    <location>
        <position position="46"/>
    </location>
    <ligand>
        <name>[2Fe-2S] cluster</name>
        <dbReference type="ChEBI" id="CHEBI:190135"/>
    </ligand>
</feature>
<feature type="binding site" evidence="1">
    <location>
        <position position="49"/>
    </location>
    <ligand>
        <name>[2Fe-2S] cluster</name>
        <dbReference type="ChEBI" id="CHEBI:190135"/>
    </ligand>
</feature>
<feature type="binding site" evidence="1">
    <location>
        <position position="86"/>
    </location>
    <ligand>
        <name>[2Fe-2S] cluster</name>
        <dbReference type="ChEBI" id="CHEBI:190135"/>
    </ligand>
</feature>
<accession>G2IN77</accession>
<dbReference type="EC" id="1.14.13.-" evidence="2"/>
<dbReference type="EMBL" id="AP012222">
    <property type="protein sequence ID" value="BAK65525.1"/>
    <property type="molecule type" value="Genomic_DNA"/>
</dbReference>
<dbReference type="RefSeq" id="WP_014075176.1">
    <property type="nucleotide sequence ID" value="NC_015976.1"/>
</dbReference>
<dbReference type="SMR" id="G2IN77"/>
<dbReference type="STRING" id="627192.SLG_08500"/>
<dbReference type="KEGG" id="ssy:SLG_08500"/>
<dbReference type="eggNOG" id="COG0633">
    <property type="taxonomic scope" value="Bacteria"/>
</dbReference>
<dbReference type="HOGENOM" id="CLU_082632_5_1_5"/>
<dbReference type="OrthoDB" id="9799640at2"/>
<dbReference type="Proteomes" id="UP000001275">
    <property type="component" value="Chromosome"/>
</dbReference>
<dbReference type="GO" id="GO:0051537">
    <property type="term" value="F:2 iron, 2 sulfur cluster binding"/>
    <property type="evidence" value="ECO:0007669"/>
    <property type="project" value="UniProtKB-KW"/>
</dbReference>
<dbReference type="GO" id="GO:0009055">
    <property type="term" value="F:electron transfer activity"/>
    <property type="evidence" value="ECO:0007669"/>
    <property type="project" value="TreeGrafter"/>
</dbReference>
<dbReference type="GO" id="GO:0046872">
    <property type="term" value="F:metal ion binding"/>
    <property type="evidence" value="ECO:0007669"/>
    <property type="project" value="UniProtKB-KW"/>
</dbReference>
<dbReference type="GO" id="GO:0004497">
    <property type="term" value="F:monooxygenase activity"/>
    <property type="evidence" value="ECO:0007669"/>
    <property type="project" value="UniProtKB-KW"/>
</dbReference>
<dbReference type="GO" id="GO:0140647">
    <property type="term" value="P:P450-containing electron transport chain"/>
    <property type="evidence" value="ECO:0007669"/>
    <property type="project" value="InterPro"/>
</dbReference>
<dbReference type="CDD" id="cd00207">
    <property type="entry name" value="fer2"/>
    <property type="match status" value="1"/>
</dbReference>
<dbReference type="Gene3D" id="3.10.20.30">
    <property type="match status" value="1"/>
</dbReference>
<dbReference type="InterPro" id="IPR036010">
    <property type="entry name" value="2Fe-2S_ferredoxin-like_sf"/>
</dbReference>
<dbReference type="InterPro" id="IPR001041">
    <property type="entry name" value="2Fe-2S_ferredoxin-type"/>
</dbReference>
<dbReference type="InterPro" id="IPR001055">
    <property type="entry name" value="Adrenodoxin-like"/>
</dbReference>
<dbReference type="InterPro" id="IPR012675">
    <property type="entry name" value="Beta-grasp_dom_sf"/>
</dbReference>
<dbReference type="PANTHER" id="PTHR23426:SF65">
    <property type="entry name" value="FERREDOXIN-2, MITOCHONDRIAL"/>
    <property type="match status" value="1"/>
</dbReference>
<dbReference type="PANTHER" id="PTHR23426">
    <property type="entry name" value="FERREDOXIN/ADRENODOXIN"/>
    <property type="match status" value="1"/>
</dbReference>
<dbReference type="Pfam" id="PF00111">
    <property type="entry name" value="Fer2"/>
    <property type="match status" value="1"/>
</dbReference>
<dbReference type="PRINTS" id="PR00355">
    <property type="entry name" value="ADRENODOXIN"/>
</dbReference>
<dbReference type="SUPFAM" id="SSF54292">
    <property type="entry name" value="2Fe-2S ferredoxin-like"/>
    <property type="match status" value="1"/>
</dbReference>
<dbReference type="PROSITE" id="PS51085">
    <property type="entry name" value="2FE2S_FER_2"/>
    <property type="match status" value="1"/>
</dbReference>
<organism>
    <name type="scientific">Sphingobium sp. (strain NBRC 103272 / SYK-6)</name>
    <dbReference type="NCBI Taxonomy" id="627192"/>
    <lineage>
        <taxon>Bacteria</taxon>
        <taxon>Pseudomonadati</taxon>
        <taxon>Pseudomonadota</taxon>
        <taxon>Alphaproteobacteria</taxon>
        <taxon>Sphingomonadales</taxon>
        <taxon>Sphingomonadaceae</taxon>
        <taxon>Sphingobium</taxon>
    </lineage>
</organism>
<protein>
    <recommendedName>
        <fullName evidence="4">5,5'-dehydrodivanillate O-demethylase ferredoxin subunit</fullName>
        <shortName evidence="4">DDVA O-demethylase ferredoxin subunit</shortName>
        <ecNumber evidence="2">1.14.13.-</ecNumber>
    </recommendedName>
</protein>
<keyword id="KW-0001">2Fe-2S</keyword>
<keyword id="KW-0249">Electron transport</keyword>
<keyword id="KW-0408">Iron</keyword>
<keyword id="KW-0411">Iron-sulfur</keyword>
<keyword id="KW-0479">Metal-binding</keyword>
<keyword id="KW-0503">Monooxygenase</keyword>
<keyword id="KW-0520">NAD</keyword>
<keyword id="KW-0560">Oxidoreductase</keyword>
<keyword id="KW-1185">Reference proteome</keyword>
<keyword id="KW-0813">Transport</keyword>
<reference key="1">
    <citation type="journal article" date="2012" name="J. Bacteriol.">
        <title>Complete genome sequence of Sphingobium sp. strain SYK-6, a degrader of lignin-derived biaryls and monoaryls.</title>
        <authorList>
            <person name="Masai E."/>
            <person name="Kamimura N."/>
            <person name="Kasai D."/>
            <person name="Oguchi A."/>
            <person name="Ankai A."/>
            <person name="Fukui S."/>
            <person name="Takahashi M."/>
            <person name="Yashiro I."/>
            <person name="Sasaki H."/>
            <person name="Harada T."/>
            <person name="Nakamura S."/>
            <person name="Katano Y."/>
            <person name="Narita-Yamada S."/>
            <person name="Nakazawa H."/>
            <person name="Hara H."/>
            <person name="Katayama Y."/>
            <person name="Fukuda M."/>
            <person name="Yamazaki S."/>
            <person name="Fujita N."/>
        </authorList>
    </citation>
    <scope>NUCLEOTIDE SEQUENCE [LARGE SCALE GENOMIC DNA]</scope>
    <source>
        <strain>NBRC 103272 / SYK-6</strain>
    </source>
</reference>
<reference key="2">
    <citation type="journal article" date="2014" name="Appl. Environ. Microbiol.">
        <title>Three-component O-demethylase system essential for catabolism of a lignin-derived biphenyl compound in Sphingobium sp. strain SYK-6.</title>
        <authorList>
            <person name="Yoshikata T."/>
            <person name="Suzuki K."/>
            <person name="Kamimura N."/>
            <person name="Namiki M."/>
            <person name="Hishiyama S."/>
            <person name="Araki T."/>
            <person name="Kasai D."/>
            <person name="Otsuka Y."/>
            <person name="Nakamura M."/>
            <person name="Fukuda M."/>
            <person name="Katayama Y."/>
            <person name="Masai E."/>
        </authorList>
    </citation>
    <scope>FUNCTION</scope>
    <scope>CATALYTIC ACTIVITY</scope>
    <scope>BIOPHYSICOCHEMICAL PROPERTIES</scope>
    <scope>SUBUNIT</scope>
    <scope>DISRUPTION PHENOTYPE</scope>
    <source>
        <strain>NBRC 103272 / SYK-6</strain>
    </source>
</reference>